<sequence>MGRKSVRAKEKKQKRLEERAAMAAVCAKVQAANQLGDPLGAFPVFKKFDRNGLNLSIECCKVSDLDQKTIDWAFELTKTNMQLLYEQSEWGWKEREKREELTDERAWYLIARDELAALVAFVHFRFDVECGDEVLYCYEVQLETRVRRKGVGKFLVQILQLMANSTQMKKVVLTVFKHNHGAYQFFRDALQFEIDETSPSVSGCCSDDCTYEILSKRTKFGDTPHSHTGHCAGCCH</sequence>
<organism>
    <name type="scientific">Xenopus laevis</name>
    <name type="common">African clawed frog</name>
    <dbReference type="NCBI Taxonomy" id="8355"/>
    <lineage>
        <taxon>Eukaryota</taxon>
        <taxon>Metazoa</taxon>
        <taxon>Chordata</taxon>
        <taxon>Craniata</taxon>
        <taxon>Vertebrata</taxon>
        <taxon>Euteleostomi</taxon>
        <taxon>Amphibia</taxon>
        <taxon>Batrachia</taxon>
        <taxon>Anura</taxon>
        <taxon>Pipoidea</taxon>
        <taxon>Pipidae</taxon>
        <taxon>Xenopodinae</taxon>
        <taxon>Xenopus</taxon>
        <taxon>Xenopus</taxon>
    </lineage>
</organism>
<accession>Q6NUH2</accession>
<proteinExistence type="evidence at transcript level"/>
<feature type="initiator methionine" description="Removed" evidence="3">
    <location>
        <position position="1"/>
    </location>
</feature>
<feature type="chain" id="PRO_0000284900" description="N-alpha-acetyltransferase 40">
    <location>
        <begin position="2"/>
        <end position="236"/>
    </location>
</feature>
<feature type="domain" description="N-acetyltransferase" evidence="4">
    <location>
        <begin position="63"/>
        <end position="217"/>
    </location>
</feature>
<feature type="binding site" evidence="1">
    <location>
        <position position="85"/>
    </location>
    <ligand>
        <name>substrate</name>
    </ligand>
</feature>
<feature type="binding site" evidence="1">
    <location>
        <begin position="127"/>
        <end position="129"/>
    </location>
    <ligand>
        <name>substrate</name>
    </ligand>
</feature>
<feature type="binding site" evidence="1">
    <location>
        <position position="138"/>
    </location>
    <ligand>
        <name>substrate</name>
    </ligand>
</feature>
<feature type="binding site" evidence="1">
    <location>
        <begin position="140"/>
        <end position="142"/>
    </location>
    <ligand>
        <name>acetyl-CoA</name>
        <dbReference type="ChEBI" id="CHEBI:57288"/>
    </ligand>
</feature>
<feature type="binding site" evidence="1">
    <location>
        <begin position="148"/>
        <end position="153"/>
    </location>
    <ligand>
        <name>acetyl-CoA</name>
        <dbReference type="ChEBI" id="CHEBI:57288"/>
    </ligand>
</feature>
<feature type="binding site" evidence="1">
    <location>
        <position position="174"/>
    </location>
    <ligand>
        <name>substrate</name>
    </ligand>
</feature>
<feature type="binding site" evidence="1">
    <location>
        <position position="179"/>
    </location>
    <ligand>
        <name>acetyl-CoA</name>
        <dbReference type="ChEBI" id="CHEBI:57288"/>
    </ligand>
</feature>
<feature type="binding site" evidence="1">
    <location>
        <position position="211"/>
    </location>
    <ligand>
        <name>substrate</name>
    </ligand>
</feature>
<feature type="site" description="Essential for catalytic activity" evidence="1">
    <location>
        <position position="139"/>
    </location>
</feature>
<feature type="lipid moiety-binding region" description="N-myristoyl glycine" evidence="3">
    <location>
        <position position="2"/>
    </location>
</feature>
<dbReference type="EC" id="2.3.1.257" evidence="1"/>
<dbReference type="EMBL" id="BC068615">
    <property type="protein sequence ID" value="AAH68615.1"/>
    <property type="molecule type" value="mRNA"/>
</dbReference>
<dbReference type="RefSeq" id="NP_001087260.1">
    <property type="nucleotide sequence ID" value="NM_001093791.1"/>
</dbReference>
<dbReference type="SMR" id="Q6NUH2"/>
<dbReference type="BioGRID" id="101095">
    <property type="interactions" value="2"/>
</dbReference>
<dbReference type="DNASU" id="414673"/>
<dbReference type="GeneID" id="414673"/>
<dbReference type="KEGG" id="xla:414673"/>
<dbReference type="AGR" id="Xenbase:XB-GENE-5846126"/>
<dbReference type="CTD" id="414673"/>
<dbReference type="Xenbase" id="XB-GENE-5846126">
    <property type="gene designation" value="naa40.L"/>
</dbReference>
<dbReference type="OMA" id="AYLHYRF"/>
<dbReference type="OrthoDB" id="424551at2759"/>
<dbReference type="Proteomes" id="UP000186698">
    <property type="component" value="Chromosome 4L"/>
</dbReference>
<dbReference type="Bgee" id="414673">
    <property type="expression patterns" value="Expressed in egg cell and 19 other cell types or tissues"/>
</dbReference>
<dbReference type="GO" id="GO:0005737">
    <property type="term" value="C:cytoplasm"/>
    <property type="evidence" value="ECO:0007669"/>
    <property type="project" value="UniProtKB-SubCell"/>
</dbReference>
<dbReference type="GO" id="GO:0005634">
    <property type="term" value="C:nucleus"/>
    <property type="evidence" value="ECO:0000318"/>
    <property type="project" value="GO_Central"/>
</dbReference>
<dbReference type="GO" id="GO:0043998">
    <property type="term" value="F:histone H2A acetyltransferase activity"/>
    <property type="evidence" value="ECO:0000250"/>
    <property type="project" value="UniProtKB"/>
</dbReference>
<dbReference type="GO" id="GO:0010485">
    <property type="term" value="F:histone H4 acetyltransferase activity"/>
    <property type="evidence" value="ECO:0000250"/>
    <property type="project" value="UniProtKB"/>
</dbReference>
<dbReference type="GO" id="GO:1990189">
    <property type="term" value="F:protein N-terminal-serine acetyltransferase activity"/>
    <property type="evidence" value="ECO:0000250"/>
    <property type="project" value="UniProtKB"/>
</dbReference>
<dbReference type="FunFam" id="3.40.630.30:FF:000033">
    <property type="entry name" value="N-alpha-acetyltransferase 40 isoform X1"/>
    <property type="match status" value="1"/>
</dbReference>
<dbReference type="Gene3D" id="3.40.630.30">
    <property type="match status" value="1"/>
</dbReference>
<dbReference type="InterPro" id="IPR016181">
    <property type="entry name" value="Acyl_CoA_acyltransferase"/>
</dbReference>
<dbReference type="InterPro" id="IPR000182">
    <property type="entry name" value="GNAT_dom"/>
</dbReference>
<dbReference type="InterPro" id="IPR039949">
    <property type="entry name" value="NAA40"/>
</dbReference>
<dbReference type="PANTHER" id="PTHR20531">
    <property type="entry name" value="N-ALPHA-ACETYLTRANSFERASE 40"/>
    <property type="match status" value="1"/>
</dbReference>
<dbReference type="PANTHER" id="PTHR20531:SF1">
    <property type="entry name" value="N-ALPHA-ACETYLTRANSFERASE 40"/>
    <property type="match status" value="1"/>
</dbReference>
<dbReference type="Pfam" id="PF00583">
    <property type="entry name" value="Acetyltransf_1"/>
    <property type="match status" value="1"/>
</dbReference>
<dbReference type="SUPFAM" id="SSF55729">
    <property type="entry name" value="Acyl-CoA N-acyltransferases (Nat)"/>
    <property type="match status" value="1"/>
</dbReference>
<dbReference type="PROSITE" id="PS51186">
    <property type="entry name" value="GNAT"/>
    <property type="match status" value="1"/>
</dbReference>
<comment type="function">
    <text evidence="1 2">N-alpha-acetyltransferase that specifically mediates the acetylation of the N-terminal residues of histones H4 and H2A. In contrast to other N-alpha-acetyltransferase, has a very specific selectivity for histones H4 and H2A N-terminus and specifically recognizes the 'Ser-Gly-Arg-Gly sequence'.</text>
</comment>
<comment type="catalytic activity">
    <reaction evidence="1">
        <text>N-terminal L-seryl-[histone H4] + acetyl-CoA = N-terminal N(alpha)-acetyl-L-seryl-[histone H4] + CoA + H(+)</text>
        <dbReference type="Rhea" id="RHEA:50596"/>
        <dbReference type="Rhea" id="RHEA-COMP:12740"/>
        <dbReference type="Rhea" id="RHEA-COMP:12743"/>
        <dbReference type="ChEBI" id="CHEBI:15378"/>
        <dbReference type="ChEBI" id="CHEBI:57287"/>
        <dbReference type="ChEBI" id="CHEBI:57288"/>
        <dbReference type="ChEBI" id="CHEBI:64738"/>
        <dbReference type="ChEBI" id="CHEBI:83690"/>
        <dbReference type="EC" id="2.3.1.257"/>
    </reaction>
</comment>
<comment type="catalytic activity">
    <reaction evidence="1">
        <text>N-terminal L-seryl-[histone H2A] + acetyl-CoA = N-terminal N(alpha)-acetyl-L-seryl-[histone H2A] + CoA + H(+)</text>
        <dbReference type="Rhea" id="RHEA:50600"/>
        <dbReference type="Rhea" id="RHEA-COMP:12742"/>
        <dbReference type="Rhea" id="RHEA-COMP:12744"/>
        <dbReference type="ChEBI" id="CHEBI:15378"/>
        <dbReference type="ChEBI" id="CHEBI:57287"/>
        <dbReference type="ChEBI" id="CHEBI:57288"/>
        <dbReference type="ChEBI" id="CHEBI:64738"/>
        <dbReference type="ChEBI" id="CHEBI:83690"/>
        <dbReference type="EC" id="2.3.1.257"/>
    </reaction>
</comment>
<comment type="subcellular location">
    <subcellularLocation>
        <location evidence="1">Cytoplasm</location>
    </subcellularLocation>
    <subcellularLocation>
        <location evidence="1">Nucleus</location>
    </subcellularLocation>
</comment>
<comment type="similarity">
    <text evidence="5">Belongs to the acetyltransferase family. NAA40 subfamily.</text>
</comment>
<reference key="1">
    <citation type="submission" date="2004-04" db="EMBL/GenBank/DDBJ databases">
        <authorList>
            <consortium name="NIH - Xenopus Gene Collection (XGC) project"/>
        </authorList>
    </citation>
    <scope>NUCLEOTIDE SEQUENCE [LARGE SCALE MRNA]</scope>
    <source>
        <tissue>Embryo</tissue>
    </source>
</reference>
<evidence type="ECO:0000250" key="1">
    <source>
        <dbReference type="UniProtKB" id="Q86UY6"/>
    </source>
</evidence>
<evidence type="ECO:0000250" key="2">
    <source>
        <dbReference type="UniProtKB" id="Q8VE10"/>
    </source>
</evidence>
<evidence type="ECO:0000255" key="3"/>
<evidence type="ECO:0000255" key="4">
    <source>
        <dbReference type="PROSITE-ProRule" id="PRU00532"/>
    </source>
</evidence>
<evidence type="ECO:0000305" key="5"/>
<gene>
    <name type="primary">naa40</name>
    <name type="synonym">nat11</name>
</gene>
<keyword id="KW-0012">Acyltransferase</keyword>
<keyword id="KW-0963">Cytoplasm</keyword>
<keyword id="KW-0449">Lipoprotein</keyword>
<keyword id="KW-0519">Myristate</keyword>
<keyword id="KW-0539">Nucleus</keyword>
<keyword id="KW-1185">Reference proteome</keyword>
<keyword id="KW-0808">Transferase</keyword>
<name>NAA40_XENLA</name>
<protein>
    <recommendedName>
        <fullName evidence="1">N-alpha-acetyltransferase 40</fullName>
        <ecNumber evidence="1">2.3.1.257</ecNumber>
    </recommendedName>
    <alternativeName>
        <fullName>N-acetyltransferase 11</fullName>
    </alternativeName>
    <alternativeName>
        <fullName evidence="1">N-alpha-acetyltransferase D</fullName>
        <shortName evidence="1">NatD</shortName>
    </alternativeName>
</protein>